<feature type="peptide" id="PRO_0000044688" description="Termicin">
    <location>
        <begin position="1"/>
        <end position="36"/>
    </location>
</feature>
<feature type="modified residue" description="Glycine amide" evidence="1">
    <location>
        <position position="36"/>
    </location>
</feature>
<feature type="disulfide bond" evidence="1">
    <location>
        <begin position="2"/>
        <end position="24"/>
    </location>
</feature>
<feature type="disulfide bond" evidence="1">
    <location>
        <begin position="7"/>
        <end position="29"/>
    </location>
</feature>
<feature type="disulfide bond" evidence="1">
    <location>
        <begin position="11"/>
        <end position="31"/>
    </location>
</feature>
<feature type="helix" evidence="2">
    <location>
        <begin position="4"/>
        <end position="14"/>
    </location>
</feature>
<feature type="strand" evidence="2">
    <location>
        <begin position="19"/>
        <end position="25"/>
    </location>
</feature>
<feature type="strand" evidence="2">
    <location>
        <begin position="28"/>
        <end position="33"/>
    </location>
</feature>
<proteinExistence type="evidence at protein level"/>
<name>TERN_PSEUS</name>
<comment type="function">
    <text evidence="1">Weak activity against Gram-positive bacteria B.megaterium, S.pyogenes and M.luteus, strong activity against yeasts C.albicans, C.neoformans and S.cerevisiae and filamentous fungi F.oxysporum, F.culmorum, N.crassa and N.hematococca. Less active against filamentous fungus T.viride. Inactive against Gram-positive bacteria A.viridans and S.aureus, filamentous fungi A.fumigatus and B.bassiana and yeast C.glabrata.</text>
</comment>
<comment type="subcellular location">
    <subcellularLocation>
        <location>Secreted</location>
    </subcellularLocation>
</comment>
<comment type="tissue specificity">
    <text evidence="1">Expressed in salivary glands and hemocytes.</text>
</comment>
<comment type="induction">
    <text>By bacterial infection.</text>
</comment>
<comment type="mass spectrometry"/>
<dbReference type="PDB" id="1MM0">
    <property type="method" value="NMR"/>
    <property type="chains" value="A=1-36"/>
</dbReference>
<dbReference type="PDBsum" id="1MM0"/>
<dbReference type="SMR" id="P82321"/>
<dbReference type="EvolutionaryTrace" id="P82321"/>
<dbReference type="GO" id="GO:0005576">
    <property type="term" value="C:extracellular region"/>
    <property type="evidence" value="ECO:0007669"/>
    <property type="project" value="UniProtKB-SubCell"/>
</dbReference>
<dbReference type="GO" id="GO:0042742">
    <property type="term" value="P:defense response to bacterium"/>
    <property type="evidence" value="ECO:0007669"/>
    <property type="project" value="UniProtKB-KW"/>
</dbReference>
<dbReference type="GO" id="GO:0050832">
    <property type="term" value="P:defense response to fungus"/>
    <property type="evidence" value="ECO:0007669"/>
    <property type="project" value="UniProtKB-KW"/>
</dbReference>
<dbReference type="GO" id="GO:0031640">
    <property type="term" value="P:killing of cells of another organism"/>
    <property type="evidence" value="ECO:0007669"/>
    <property type="project" value="UniProtKB-KW"/>
</dbReference>
<dbReference type="InterPro" id="IPR036574">
    <property type="entry name" value="Scorpion_toxin-like_sf"/>
</dbReference>
<dbReference type="InterPro" id="IPR024723">
    <property type="entry name" value="Termicin"/>
</dbReference>
<dbReference type="Pfam" id="PF11415">
    <property type="entry name" value="Toxin_37"/>
    <property type="match status" value="1"/>
</dbReference>
<dbReference type="SUPFAM" id="SSF57095">
    <property type="entry name" value="Scorpion toxin-like"/>
    <property type="match status" value="1"/>
</dbReference>
<accession>P82321</accession>
<evidence type="ECO:0000269" key="1">
    <source>
    </source>
</evidence>
<evidence type="ECO:0007829" key="2">
    <source>
        <dbReference type="PDB" id="1MM0"/>
    </source>
</evidence>
<protein>
    <recommendedName>
        <fullName>Termicin</fullName>
    </recommendedName>
</protein>
<sequence>ACNFQSCWATCQAQHSIYFRRAFCDRSQCKCVFVRG</sequence>
<keyword id="KW-0002">3D-structure</keyword>
<keyword id="KW-0027">Amidation</keyword>
<keyword id="KW-0044">Antibiotic</keyword>
<keyword id="KW-0929">Antimicrobial</keyword>
<keyword id="KW-0903">Direct protein sequencing</keyword>
<keyword id="KW-1015">Disulfide bond</keyword>
<keyword id="KW-0295">Fungicide</keyword>
<keyword id="KW-0964">Secreted</keyword>
<organism>
    <name type="scientific">Pseudacanthotermes spiniger</name>
    <dbReference type="NCBI Taxonomy" id="115113"/>
    <lineage>
        <taxon>Eukaryota</taxon>
        <taxon>Metazoa</taxon>
        <taxon>Ecdysozoa</taxon>
        <taxon>Arthropoda</taxon>
        <taxon>Hexapoda</taxon>
        <taxon>Insecta</taxon>
        <taxon>Pterygota</taxon>
        <taxon>Neoptera</taxon>
        <taxon>Polyneoptera</taxon>
        <taxon>Dictyoptera</taxon>
        <taxon>Blattodea</taxon>
        <taxon>Blattoidea</taxon>
        <taxon>Termitoidae</taxon>
        <taxon>Termitidae</taxon>
        <taxon>Macrotermitinae</taxon>
        <taxon>Pseudacanthotermes</taxon>
    </lineage>
</organism>
<reference key="1">
    <citation type="journal article" date="2001" name="J. Biol. Chem.">
        <title>Insect immunity. Constitutive expression of a cysteine-rich antifungal and a linear antibacterial peptide in a termite insect.</title>
        <authorList>
            <person name="Lamberty M."/>
            <person name="Zachary D."/>
            <person name="Lanot R."/>
            <person name="Bordereau C."/>
            <person name="Robert A."/>
            <person name="Hoffmann J.A."/>
            <person name="Bulet P."/>
        </authorList>
    </citation>
    <scope>PROTEIN SEQUENCE</scope>
    <scope>MASS SPECTROMETRY</scope>
    <scope>FUNCTION</scope>
    <scope>TISSUE SPECIFICITY</scope>
    <scope>AMIDATION AT GLY-36</scope>
    <scope>DISULFIDE BONDS</scope>
    <source>
        <tissue>Blood</tissue>
        <tissue>Salivary gland</tissue>
    </source>
</reference>
<reference key="2">
    <citation type="journal article" date="2003" name="Protein Sci.">
        <title>Solution structure of termicin, an antimicrobial peptide from the termite Pseudacanthotermes spiniger.</title>
        <authorList>
            <person name="Da Silva P."/>
            <person name="Jouvensal L."/>
            <person name="Lamberty M."/>
            <person name="Bulet P."/>
            <person name="Caille A."/>
            <person name="Vovelle F."/>
        </authorList>
    </citation>
    <scope>STRUCTURE BY NMR</scope>
</reference>